<dbReference type="EC" id="6.5.1.2" evidence="1"/>
<dbReference type="EMBL" id="AP009178">
    <property type="protein sequence ID" value="BAF70242.1"/>
    <property type="molecule type" value="Genomic_DNA"/>
</dbReference>
<dbReference type="RefSeq" id="WP_012082505.1">
    <property type="nucleotide sequence ID" value="NC_009662.1"/>
</dbReference>
<dbReference type="SMR" id="A6Q433"/>
<dbReference type="FunCoup" id="A6Q433">
    <property type="interactions" value="392"/>
</dbReference>
<dbReference type="STRING" id="387092.NIS_1133"/>
<dbReference type="KEGG" id="nis:NIS_1133"/>
<dbReference type="eggNOG" id="COG0272">
    <property type="taxonomic scope" value="Bacteria"/>
</dbReference>
<dbReference type="HOGENOM" id="CLU_007764_2_1_7"/>
<dbReference type="InParanoid" id="A6Q433"/>
<dbReference type="OrthoDB" id="9759736at2"/>
<dbReference type="Proteomes" id="UP000001118">
    <property type="component" value="Chromosome"/>
</dbReference>
<dbReference type="GO" id="GO:0005829">
    <property type="term" value="C:cytosol"/>
    <property type="evidence" value="ECO:0007669"/>
    <property type="project" value="TreeGrafter"/>
</dbReference>
<dbReference type="GO" id="GO:0003677">
    <property type="term" value="F:DNA binding"/>
    <property type="evidence" value="ECO:0007669"/>
    <property type="project" value="InterPro"/>
</dbReference>
<dbReference type="GO" id="GO:0003911">
    <property type="term" value="F:DNA ligase (NAD+) activity"/>
    <property type="evidence" value="ECO:0007669"/>
    <property type="project" value="UniProtKB-UniRule"/>
</dbReference>
<dbReference type="GO" id="GO:0046872">
    <property type="term" value="F:metal ion binding"/>
    <property type="evidence" value="ECO:0007669"/>
    <property type="project" value="UniProtKB-KW"/>
</dbReference>
<dbReference type="GO" id="GO:0006281">
    <property type="term" value="P:DNA repair"/>
    <property type="evidence" value="ECO:0007669"/>
    <property type="project" value="UniProtKB-KW"/>
</dbReference>
<dbReference type="GO" id="GO:0006260">
    <property type="term" value="P:DNA replication"/>
    <property type="evidence" value="ECO:0007669"/>
    <property type="project" value="UniProtKB-KW"/>
</dbReference>
<dbReference type="CDD" id="cd17748">
    <property type="entry name" value="BRCT_DNA_ligase_like"/>
    <property type="match status" value="1"/>
</dbReference>
<dbReference type="CDD" id="cd00114">
    <property type="entry name" value="LIGANc"/>
    <property type="match status" value="1"/>
</dbReference>
<dbReference type="FunFam" id="1.10.150.20:FF:000007">
    <property type="entry name" value="DNA ligase"/>
    <property type="match status" value="1"/>
</dbReference>
<dbReference type="FunFam" id="2.40.50.140:FF:000012">
    <property type="entry name" value="DNA ligase"/>
    <property type="match status" value="1"/>
</dbReference>
<dbReference type="Gene3D" id="1.10.150.20">
    <property type="entry name" value="5' to 3' exonuclease, C-terminal subdomain"/>
    <property type="match status" value="2"/>
</dbReference>
<dbReference type="Gene3D" id="3.40.50.10190">
    <property type="entry name" value="BRCT domain"/>
    <property type="match status" value="1"/>
</dbReference>
<dbReference type="Gene3D" id="3.30.470.30">
    <property type="entry name" value="DNA ligase/mRNA capping enzyme"/>
    <property type="match status" value="1"/>
</dbReference>
<dbReference type="Gene3D" id="1.10.287.610">
    <property type="entry name" value="Helix hairpin bin"/>
    <property type="match status" value="1"/>
</dbReference>
<dbReference type="Gene3D" id="2.40.50.140">
    <property type="entry name" value="Nucleic acid-binding proteins"/>
    <property type="match status" value="1"/>
</dbReference>
<dbReference type="HAMAP" id="MF_01588">
    <property type="entry name" value="DNA_ligase_A"/>
    <property type="match status" value="1"/>
</dbReference>
<dbReference type="InterPro" id="IPR001357">
    <property type="entry name" value="BRCT_dom"/>
</dbReference>
<dbReference type="InterPro" id="IPR036420">
    <property type="entry name" value="BRCT_dom_sf"/>
</dbReference>
<dbReference type="InterPro" id="IPR041663">
    <property type="entry name" value="DisA/LigA_HHH"/>
</dbReference>
<dbReference type="InterPro" id="IPR001679">
    <property type="entry name" value="DNA_ligase"/>
</dbReference>
<dbReference type="InterPro" id="IPR018239">
    <property type="entry name" value="DNA_ligase_AS"/>
</dbReference>
<dbReference type="InterPro" id="IPR033136">
    <property type="entry name" value="DNA_ligase_CS"/>
</dbReference>
<dbReference type="InterPro" id="IPR013839">
    <property type="entry name" value="DNAligase_adenylation"/>
</dbReference>
<dbReference type="InterPro" id="IPR013840">
    <property type="entry name" value="DNAligase_N"/>
</dbReference>
<dbReference type="InterPro" id="IPR003583">
    <property type="entry name" value="Hlx-hairpin-Hlx_DNA-bd_motif"/>
</dbReference>
<dbReference type="InterPro" id="IPR012340">
    <property type="entry name" value="NA-bd_OB-fold"/>
</dbReference>
<dbReference type="InterPro" id="IPR004150">
    <property type="entry name" value="NAD_DNA_ligase_OB"/>
</dbReference>
<dbReference type="InterPro" id="IPR010994">
    <property type="entry name" value="RuvA_2-like"/>
</dbReference>
<dbReference type="NCBIfam" id="TIGR00575">
    <property type="entry name" value="dnlj"/>
    <property type="match status" value="1"/>
</dbReference>
<dbReference type="NCBIfam" id="NF005932">
    <property type="entry name" value="PRK07956.1"/>
    <property type="match status" value="1"/>
</dbReference>
<dbReference type="PANTHER" id="PTHR23389">
    <property type="entry name" value="CHROMOSOME TRANSMISSION FIDELITY FACTOR 18"/>
    <property type="match status" value="1"/>
</dbReference>
<dbReference type="PANTHER" id="PTHR23389:SF9">
    <property type="entry name" value="DNA LIGASE"/>
    <property type="match status" value="1"/>
</dbReference>
<dbReference type="Pfam" id="PF00533">
    <property type="entry name" value="BRCT"/>
    <property type="match status" value="1"/>
</dbReference>
<dbReference type="Pfam" id="PF01653">
    <property type="entry name" value="DNA_ligase_aden"/>
    <property type="match status" value="1"/>
</dbReference>
<dbReference type="Pfam" id="PF03120">
    <property type="entry name" value="DNA_ligase_OB"/>
    <property type="match status" value="1"/>
</dbReference>
<dbReference type="Pfam" id="PF12826">
    <property type="entry name" value="HHH_2"/>
    <property type="match status" value="1"/>
</dbReference>
<dbReference type="Pfam" id="PF14520">
    <property type="entry name" value="HHH_5"/>
    <property type="match status" value="1"/>
</dbReference>
<dbReference type="PIRSF" id="PIRSF001604">
    <property type="entry name" value="LigA"/>
    <property type="match status" value="1"/>
</dbReference>
<dbReference type="SMART" id="SM00292">
    <property type="entry name" value="BRCT"/>
    <property type="match status" value="1"/>
</dbReference>
<dbReference type="SMART" id="SM00278">
    <property type="entry name" value="HhH1"/>
    <property type="match status" value="3"/>
</dbReference>
<dbReference type="SMART" id="SM00532">
    <property type="entry name" value="LIGANc"/>
    <property type="match status" value="1"/>
</dbReference>
<dbReference type="SUPFAM" id="SSF52113">
    <property type="entry name" value="BRCT domain"/>
    <property type="match status" value="1"/>
</dbReference>
<dbReference type="SUPFAM" id="SSF56091">
    <property type="entry name" value="DNA ligase/mRNA capping enzyme, catalytic domain"/>
    <property type="match status" value="1"/>
</dbReference>
<dbReference type="SUPFAM" id="SSF50249">
    <property type="entry name" value="Nucleic acid-binding proteins"/>
    <property type="match status" value="1"/>
</dbReference>
<dbReference type="SUPFAM" id="SSF47781">
    <property type="entry name" value="RuvA domain 2-like"/>
    <property type="match status" value="1"/>
</dbReference>
<dbReference type="PROSITE" id="PS50172">
    <property type="entry name" value="BRCT"/>
    <property type="match status" value="1"/>
</dbReference>
<dbReference type="PROSITE" id="PS01055">
    <property type="entry name" value="DNA_LIGASE_N1"/>
    <property type="match status" value="1"/>
</dbReference>
<dbReference type="PROSITE" id="PS01056">
    <property type="entry name" value="DNA_LIGASE_N2"/>
    <property type="match status" value="1"/>
</dbReference>
<keyword id="KW-0227">DNA damage</keyword>
<keyword id="KW-0234">DNA repair</keyword>
<keyword id="KW-0235">DNA replication</keyword>
<keyword id="KW-0436">Ligase</keyword>
<keyword id="KW-0460">Magnesium</keyword>
<keyword id="KW-0464">Manganese</keyword>
<keyword id="KW-0479">Metal-binding</keyword>
<keyword id="KW-0520">NAD</keyword>
<keyword id="KW-1185">Reference proteome</keyword>
<keyword id="KW-0862">Zinc</keyword>
<feature type="chain" id="PRO_0000313335" description="DNA ligase">
    <location>
        <begin position="1"/>
        <end position="660"/>
    </location>
</feature>
<feature type="domain" description="BRCT" evidence="1">
    <location>
        <begin position="578"/>
        <end position="660"/>
    </location>
</feature>
<feature type="active site" description="N6-AMP-lysine intermediate" evidence="1">
    <location>
        <position position="114"/>
    </location>
</feature>
<feature type="binding site" evidence="1">
    <location>
        <begin position="32"/>
        <end position="36"/>
    </location>
    <ligand>
        <name>NAD(+)</name>
        <dbReference type="ChEBI" id="CHEBI:57540"/>
    </ligand>
</feature>
<feature type="binding site" evidence="1">
    <location>
        <begin position="81"/>
        <end position="82"/>
    </location>
    <ligand>
        <name>NAD(+)</name>
        <dbReference type="ChEBI" id="CHEBI:57540"/>
    </ligand>
</feature>
<feature type="binding site" evidence="1">
    <location>
        <position position="112"/>
    </location>
    <ligand>
        <name>NAD(+)</name>
        <dbReference type="ChEBI" id="CHEBI:57540"/>
    </ligand>
</feature>
<feature type="binding site" evidence="1">
    <location>
        <position position="135"/>
    </location>
    <ligand>
        <name>NAD(+)</name>
        <dbReference type="ChEBI" id="CHEBI:57540"/>
    </ligand>
</feature>
<feature type="binding site" evidence="1">
    <location>
        <position position="169"/>
    </location>
    <ligand>
        <name>NAD(+)</name>
        <dbReference type="ChEBI" id="CHEBI:57540"/>
    </ligand>
</feature>
<feature type="binding site" evidence="1">
    <location>
        <position position="284"/>
    </location>
    <ligand>
        <name>NAD(+)</name>
        <dbReference type="ChEBI" id="CHEBI:57540"/>
    </ligand>
</feature>
<feature type="binding site" evidence="1">
    <location>
        <position position="308"/>
    </location>
    <ligand>
        <name>NAD(+)</name>
        <dbReference type="ChEBI" id="CHEBI:57540"/>
    </ligand>
</feature>
<feature type="binding site" evidence="1">
    <location>
        <position position="402"/>
    </location>
    <ligand>
        <name>Zn(2+)</name>
        <dbReference type="ChEBI" id="CHEBI:29105"/>
    </ligand>
</feature>
<feature type="binding site" evidence="1">
    <location>
        <position position="405"/>
    </location>
    <ligand>
        <name>Zn(2+)</name>
        <dbReference type="ChEBI" id="CHEBI:29105"/>
    </ligand>
</feature>
<feature type="binding site" evidence="1">
    <location>
        <position position="418"/>
    </location>
    <ligand>
        <name>Zn(2+)</name>
        <dbReference type="ChEBI" id="CHEBI:29105"/>
    </ligand>
</feature>
<feature type="binding site" evidence="1">
    <location>
        <position position="423"/>
    </location>
    <ligand>
        <name>Zn(2+)</name>
        <dbReference type="ChEBI" id="CHEBI:29105"/>
    </ligand>
</feature>
<organism>
    <name type="scientific">Nitratiruptor sp. (strain SB155-2)</name>
    <dbReference type="NCBI Taxonomy" id="387092"/>
    <lineage>
        <taxon>Bacteria</taxon>
        <taxon>Pseudomonadati</taxon>
        <taxon>Campylobacterota</taxon>
        <taxon>Epsilonproteobacteria</taxon>
        <taxon>Nautiliales</taxon>
        <taxon>Nitratiruptoraceae</taxon>
        <taxon>Nitratiruptor</taxon>
    </lineage>
</organism>
<reference key="1">
    <citation type="journal article" date="2007" name="Proc. Natl. Acad. Sci. U.S.A.">
        <title>Deep-sea vent epsilon-proteobacterial genomes provide insights into emergence of pathogens.</title>
        <authorList>
            <person name="Nakagawa S."/>
            <person name="Takaki Y."/>
            <person name="Shimamura S."/>
            <person name="Reysenbach A.-L."/>
            <person name="Takai K."/>
            <person name="Horikoshi K."/>
        </authorList>
    </citation>
    <scope>NUCLEOTIDE SEQUENCE [LARGE SCALE GENOMIC DNA]</scope>
    <source>
        <strain>SB155-2</strain>
    </source>
</reference>
<sequence length="660" mass="75770">MIKNYQEYKEAVEKLKRWAYAYYVLDNPEVPDEVYDKLYREVEEYEKAHPDQIDPTSPTQRIGAEPAKEFKKIKHLSKMWSMEDVFNQREMHEWLERVYKNAGRKDLQFYIEPKFDGASLNLIYENGLLKSAATRGDGEVGEDVTANAKTIPSIPLGIDYKGLIEIRGEVVIRKDDFEKLNHERALKGESTFANPRNAAAGSLRQLDPKVTAQRKLYFYPWDIGYNTLNFKYQHEKMDFVYQQGFIKPFKRAICENEEEIQQLYEEFSKERDKLPVMLDGMVVKVDEIALHEILGYTVKYPRWMVAYKFPAVEKMTRIIDIVPQVGRTGVITPVAILEPVEIEGVVVERATLHNYAEIERKDIRIGDMVIVIRSGDVIPEVTKVLTQYRTGKEKKVERPKVCPVCGQPVLDEGILIKCQNLSCPARVVNSIIYFASKQCLDISGLGEATVKLLYEKGLVKDVVDLFKLKKEDLLRLPGFAEKKAQNLIDATQSVKGVECWRFVNALGIEHIGEVASKKLCEKFGLDWYKAPKEKLYEIEGFGPEMVRSIEEFVEVNKEKIEKLIELLQPTEPKKEEEVENSPLAHKTVVLTGEMKLPRSKIKELLERAGAHVTNSVSHHTDYVFYGENPGSKFQKAQQLGVPLLPEEKMWELLKEAGIEA</sequence>
<protein>
    <recommendedName>
        <fullName evidence="1">DNA ligase</fullName>
        <ecNumber evidence="1">6.5.1.2</ecNumber>
    </recommendedName>
    <alternativeName>
        <fullName evidence="1">Polydeoxyribonucleotide synthase [NAD(+)]</fullName>
    </alternativeName>
</protein>
<gene>
    <name evidence="1" type="primary">ligA</name>
    <name type="ordered locus">NIS_1133</name>
</gene>
<accession>A6Q433</accession>
<proteinExistence type="inferred from homology"/>
<comment type="function">
    <text evidence="1">DNA ligase that catalyzes the formation of phosphodiester linkages between 5'-phosphoryl and 3'-hydroxyl groups in double-stranded DNA using NAD as a coenzyme and as the energy source for the reaction. It is essential for DNA replication and repair of damaged DNA.</text>
</comment>
<comment type="catalytic activity">
    <reaction evidence="1">
        <text>NAD(+) + (deoxyribonucleotide)n-3'-hydroxyl + 5'-phospho-(deoxyribonucleotide)m = (deoxyribonucleotide)n+m + AMP + beta-nicotinamide D-nucleotide.</text>
        <dbReference type="EC" id="6.5.1.2"/>
    </reaction>
</comment>
<comment type="cofactor">
    <cofactor evidence="1">
        <name>Mg(2+)</name>
        <dbReference type="ChEBI" id="CHEBI:18420"/>
    </cofactor>
    <cofactor evidence="1">
        <name>Mn(2+)</name>
        <dbReference type="ChEBI" id="CHEBI:29035"/>
    </cofactor>
</comment>
<comment type="similarity">
    <text evidence="1">Belongs to the NAD-dependent DNA ligase family. LigA subfamily.</text>
</comment>
<name>DNLJ_NITSB</name>
<evidence type="ECO:0000255" key="1">
    <source>
        <dbReference type="HAMAP-Rule" id="MF_01588"/>
    </source>
</evidence>